<reference key="1">
    <citation type="journal article" date="2010" name="J. Bacteriol.">
        <title>Genome sequence of Pantoea ananatis LMG20103, the causative agent of Eucalyptus blight and dieback.</title>
        <authorList>
            <person name="De Maayer P."/>
            <person name="Chan W.Y."/>
            <person name="Venter S.N."/>
            <person name="Toth I.K."/>
            <person name="Birch P.R."/>
            <person name="Joubert F."/>
            <person name="Coutinho T.A."/>
        </authorList>
    </citation>
    <scope>NUCLEOTIDE SEQUENCE [LARGE SCALE GENOMIC DNA]</scope>
    <source>
        <strain>LMG 20103</strain>
    </source>
</reference>
<keyword id="KW-0010">Activator</keyword>
<keyword id="KW-1005">Bacterial flagellum biogenesis</keyword>
<keyword id="KW-0963">Cytoplasm</keyword>
<keyword id="KW-1015">Disulfide bond</keyword>
<keyword id="KW-0238">DNA-binding</keyword>
<keyword id="KW-1185">Reference proteome</keyword>
<keyword id="KW-0804">Transcription</keyword>
<keyword id="KW-0805">Transcription regulation</keyword>
<name>FLHD_PANAM</name>
<proteinExistence type="inferred from homology"/>
<organism>
    <name type="scientific">Pantoea ananatis (strain LMG 20103)</name>
    <dbReference type="NCBI Taxonomy" id="706191"/>
    <lineage>
        <taxon>Bacteria</taxon>
        <taxon>Pseudomonadati</taxon>
        <taxon>Pseudomonadota</taxon>
        <taxon>Gammaproteobacteria</taxon>
        <taxon>Enterobacterales</taxon>
        <taxon>Erwiniaceae</taxon>
        <taxon>Pantoea</taxon>
    </lineage>
</organism>
<evidence type="ECO:0000255" key="1">
    <source>
        <dbReference type="HAMAP-Rule" id="MF_00725"/>
    </source>
</evidence>
<evidence type="ECO:0000305" key="2"/>
<gene>
    <name evidence="1" type="primary">flhD</name>
    <name type="ordered locus">PANA_2234</name>
</gene>
<dbReference type="EMBL" id="CP001875">
    <property type="protein sequence ID" value="ADD77401.1"/>
    <property type="status" value="ALT_INIT"/>
    <property type="molecule type" value="Genomic_DNA"/>
</dbReference>
<dbReference type="RefSeq" id="WP_006120236.1">
    <property type="nucleotide sequence ID" value="NC_013956.2"/>
</dbReference>
<dbReference type="SMR" id="D4GGV4"/>
<dbReference type="STRING" id="706191.PANA_2234"/>
<dbReference type="GeneID" id="65789699"/>
<dbReference type="KEGG" id="pam:PANA_2234"/>
<dbReference type="eggNOG" id="ENOG5031P80">
    <property type="taxonomic scope" value="Bacteria"/>
</dbReference>
<dbReference type="HOGENOM" id="CLU_144160_0_0_6"/>
<dbReference type="Proteomes" id="UP000001702">
    <property type="component" value="Chromosome"/>
</dbReference>
<dbReference type="GO" id="GO:0005737">
    <property type="term" value="C:cytoplasm"/>
    <property type="evidence" value="ECO:0007669"/>
    <property type="project" value="UniProtKB-SubCell"/>
</dbReference>
<dbReference type="GO" id="GO:0003677">
    <property type="term" value="F:DNA binding"/>
    <property type="evidence" value="ECO:0007669"/>
    <property type="project" value="UniProtKB-UniRule"/>
</dbReference>
<dbReference type="GO" id="GO:0044780">
    <property type="term" value="P:bacterial-type flagellum assembly"/>
    <property type="evidence" value="ECO:0007669"/>
    <property type="project" value="InterPro"/>
</dbReference>
<dbReference type="GO" id="GO:0045893">
    <property type="term" value="P:positive regulation of DNA-templated transcription"/>
    <property type="evidence" value="ECO:0007669"/>
    <property type="project" value="InterPro"/>
</dbReference>
<dbReference type="GO" id="GO:1902208">
    <property type="term" value="P:regulation of bacterial-type flagellum assembly"/>
    <property type="evidence" value="ECO:0007669"/>
    <property type="project" value="UniProtKB-UniRule"/>
</dbReference>
<dbReference type="Gene3D" id="1.10.4000.10">
    <property type="entry name" value="Flagellar transcriptional activator FlhD"/>
    <property type="match status" value="1"/>
</dbReference>
<dbReference type="HAMAP" id="MF_00725">
    <property type="entry name" value="FlhD"/>
    <property type="match status" value="1"/>
</dbReference>
<dbReference type="InterPro" id="IPR023559">
    <property type="entry name" value="Flagellar_FlhD"/>
</dbReference>
<dbReference type="InterPro" id="IPR036194">
    <property type="entry name" value="FlhD_sf"/>
</dbReference>
<dbReference type="NCBIfam" id="NF002783">
    <property type="entry name" value="PRK02909.1-1"/>
    <property type="match status" value="1"/>
</dbReference>
<dbReference type="Pfam" id="PF05247">
    <property type="entry name" value="FlhD"/>
    <property type="match status" value="1"/>
</dbReference>
<dbReference type="SUPFAM" id="SSF63592">
    <property type="entry name" value="Flagellar transcriptional activator FlhD"/>
    <property type="match status" value="1"/>
</dbReference>
<protein>
    <recommendedName>
        <fullName evidence="1">Flagellar transcriptional regulator FlhD</fullName>
    </recommendedName>
</protein>
<comment type="function">
    <text evidence="1">Functions in complex with FlhC as a master transcriptional regulator that regulates transcription of several flagellar and non-flagellar operons by binding to their promoter region. Activates expression of class 2 flagellar genes, including fliA, which is a flagellum-specific sigma factor that turns on the class 3 genes. Also regulates genes whose products function in a variety of physiological pathways.</text>
</comment>
<comment type="subunit">
    <text evidence="1">Homodimer; disulfide-linked. Forms a heterohexamer composed of two FlhC and four FlhD subunits. Each FlhC binds a FlhD dimer, forming a heterotrimer, and a hexamer assembles by dimerization of two heterotrimers.</text>
</comment>
<comment type="subcellular location">
    <subcellularLocation>
        <location evidence="1">Cytoplasm</location>
    </subcellularLocation>
</comment>
<comment type="domain">
    <text evidence="1">The C-terminal region contains a putative helix-turn-helix (HTH) motif, suggesting that this region may bind DNA.</text>
</comment>
<comment type="similarity">
    <text evidence="1">Belongs to the FlhD family.</text>
</comment>
<comment type="sequence caution" evidence="2">
    <conflict type="erroneous initiation">
        <sequence resource="EMBL-CDS" id="ADD77401"/>
    </conflict>
    <text>Extended N-terminus.</text>
</comment>
<accession>D4GGV4</accession>
<sequence length="116" mass="13091">MGTSELLKHIYDINLSYLLLAQRLINQEKASAMFRLGIDEKMADALSELTLPEMVKLAETNQLVCQFRFTDSTVINRLTQESRVDDLQQIHTGILLSSRLLRSASKDAAPTKKRAV</sequence>
<feature type="chain" id="PRO_0000406776" description="Flagellar transcriptional regulator FlhD">
    <location>
        <begin position="1"/>
        <end position="116"/>
    </location>
</feature>
<feature type="disulfide bond" description="Interchain" evidence="1">
    <location>
        <position position="65"/>
    </location>
</feature>